<accession>A9M690</accession>
<protein>
    <recommendedName>
        <fullName evidence="1">UDP-N-acetylglucosamine--N-acetylmuramyl-(pentapeptide) pyrophosphoryl-undecaprenol N-acetylglucosamine transferase</fullName>
        <ecNumber evidence="1">2.4.1.227</ecNumber>
    </recommendedName>
    <alternativeName>
        <fullName evidence="1">Undecaprenyl-PP-MurNAc-pentapeptide-UDPGlcNAc GlcNAc transferase</fullName>
    </alternativeName>
</protein>
<feature type="chain" id="PRO_1000074448" description="UDP-N-acetylglucosamine--N-acetylmuramyl-(pentapeptide) pyrophosphoryl-undecaprenol N-acetylglucosamine transferase">
    <location>
        <begin position="1"/>
        <end position="379"/>
    </location>
</feature>
<feature type="binding site" evidence="1">
    <location>
        <begin position="17"/>
        <end position="19"/>
    </location>
    <ligand>
        <name>UDP-N-acetyl-alpha-D-glucosamine</name>
        <dbReference type="ChEBI" id="CHEBI:57705"/>
    </ligand>
</feature>
<feature type="binding site" evidence="1">
    <location>
        <position position="128"/>
    </location>
    <ligand>
        <name>UDP-N-acetyl-alpha-D-glucosamine</name>
        <dbReference type="ChEBI" id="CHEBI:57705"/>
    </ligand>
</feature>
<feature type="binding site" evidence="1">
    <location>
        <position position="169"/>
    </location>
    <ligand>
        <name>UDP-N-acetyl-alpha-D-glucosamine</name>
        <dbReference type="ChEBI" id="CHEBI:57705"/>
    </ligand>
</feature>
<feature type="binding site" evidence="1">
    <location>
        <position position="197"/>
    </location>
    <ligand>
        <name>UDP-N-acetyl-alpha-D-glucosamine</name>
        <dbReference type="ChEBI" id="CHEBI:57705"/>
    </ligand>
</feature>
<feature type="binding site" evidence="1">
    <location>
        <position position="298"/>
    </location>
    <ligand>
        <name>UDP-N-acetyl-alpha-D-glucosamine</name>
        <dbReference type="ChEBI" id="CHEBI:57705"/>
    </ligand>
</feature>
<proteinExistence type="inferred from homology"/>
<comment type="function">
    <text evidence="1">Cell wall formation. Catalyzes the transfer of a GlcNAc subunit on undecaprenyl-pyrophosphoryl-MurNAc-pentapeptide (lipid intermediate I) to form undecaprenyl-pyrophosphoryl-MurNAc-(pentapeptide)GlcNAc (lipid intermediate II).</text>
</comment>
<comment type="catalytic activity">
    <reaction evidence="1">
        <text>di-trans,octa-cis-undecaprenyl diphospho-N-acetyl-alpha-D-muramoyl-L-alanyl-D-glutamyl-meso-2,6-diaminopimeloyl-D-alanyl-D-alanine + UDP-N-acetyl-alpha-D-glucosamine = di-trans,octa-cis-undecaprenyl diphospho-[N-acetyl-alpha-D-glucosaminyl-(1-&gt;4)]-N-acetyl-alpha-D-muramoyl-L-alanyl-D-glutamyl-meso-2,6-diaminopimeloyl-D-alanyl-D-alanine + UDP + H(+)</text>
        <dbReference type="Rhea" id="RHEA:31227"/>
        <dbReference type="ChEBI" id="CHEBI:15378"/>
        <dbReference type="ChEBI" id="CHEBI:57705"/>
        <dbReference type="ChEBI" id="CHEBI:58223"/>
        <dbReference type="ChEBI" id="CHEBI:61387"/>
        <dbReference type="ChEBI" id="CHEBI:61388"/>
        <dbReference type="EC" id="2.4.1.227"/>
    </reaction>
</comment>
<comment type="pathway">
    <text evidence="1">Cell wall biogenesis; peptidoglycan biosynthesis.</text>
</comment>
<comment type="subcellular location">
    <subcellularLocation>
        <location evidence="1">Cell inner membrane</location>
        <topology evidence="1">Peripheral membrane protein</topology>
        <orientation evidence="1">Cytoplasmic side</orientation>
    </subcellularLocation>
</comment>
<comment type="similarity">
    <text evidence="1">Belongs to the glycosyltransferase 28 family. MurG subfamily.</text>
</comment>
<organism>
    <name type="scientific">Brucella canis (strain ATCC 23365 / NCTC 10854 / RM-666)</name>
    <dbReference type="NCBI Taxonomy" id="483179"/>
    <lineage>
        <taxon>Bacteria</taxon>
        <taxon>Pseudomonadati</taxon>
        <taxon>Pseudomonadota</taxon>
        <taxon>Alphaproteobacteria</taxon>
        <taxon>Hyphomicrobiales</taxon>
        <taxon>Brucellaceae</taxon>
        <taxon>Brucella/Ochrobactrum group</taxon>
        <taxon>Brucella</taxon>
    </lineage>
</organism>
<name>MURG_BRUC2</name>
<dbReference type="EC" id="2.4.1.227" evidence="1"/>
<dbReference type="EMBL" id="CP000872">
    <property type="protein sequence ID" value="ABX62495.1"/>
    <property type="molecule type" value="Genomic_DNA"/>
</dbReference>
<dbReference type="RefSeq" id="WP_004690989.1">
    <property type="nucleotide sequence ID" value="NC_010103.1"/>
</dbReference>
<dbReference type="SMR" id="A9M690"/>
<dbReference type="CAZy" id="GT28">
    <property type="family name" value="Glycosyltransferase Family 28"/>
</dbReference>
<dbReference type="GeneID" id="55591083"/>
<dbReference type="KEGG" id="bcs:BCAN_A1464"/>
<dbReference type="HOGENOM" id="CLU_037404_2_1_5"/>
<dbReference type="PhylomeDB" id="A9M690"/>
<dbReference type="UniPathway" id="UPA00219"/>
<dbReference type="Proteomes" id="UP000001385">
    <property type="component" value="Chromosome I"/>
</dbReference>
<dbReference type="GO" id="GO:0005886">
    <property type="term" value="C:plasma membrane"/>
    <property type="evidence" value="ECO:0007669"/>
    <property type="project" value="UniProtKB-SubCell"/>
</dbReference>
<dbReference type="GO" id="GO:0051991">
    <property type="term" value="F:UDP-N-acetyl-D-glucosamine:N-acetylmuramoyl-L-alanyl-D-glutamyl-meso-2,6-diaminopimelyl-D-alanyl-D-alanine-diphosphoundecaprenol 4-beta-N-acetylglucosaminlytransferase activity"/>
    <property type="evidence" value="ECO:0007669"/>
    <property type="project" value="RHEA"/>
</dbReference>
<dbReference type="GO" id="GO:0050511">
    <property type="term" value="F:undecaprenyldiphospho-muramoylpentapeptide beta-N-acetylglucosaminyltransferase activity"/>
    <property type="evidence" value="ECO:0007669"/>
    <property type="project" value="UniProtKB-UniRule"/>
</dbReference>
<dbReference type="GO" id="GO:0005975">
    <property type="term" value="P:carbohydrate metabolic process"/>
    <property type="evidence" value="ECO:0007669"/>
    <property type="project" value="InterPro"/>
</dbReference>
<dbReference type="GO" id="GO:0051301">
    <property type="term" value="P:cell division"/>
    <property type="evidence" value="ECO:0007669"/>
    <property type="project" value="UniProtKB-KW"/>
</dbReference>
<dbReference type="GO" id="GO:0071555">
    <property type="term" value="P:cell wall organization"/>
    <property type="evidence" value="ECO:0007669"/>
    <property type="project" value="UniProtKB-KW"/>
</dbReference>
<dbReference type="GO" id="GO:0030259">
    <property type="term" value="P:lipid glycosylation"/>
    <property type="evidence" value="ECO:0007669"/>
    <property type="project" value="UniProtKB-UniRule"/>
</dbReference>
<dbReference type="GO" id="GO:0009252">
    <property type="term" value="P:peptidoglycan biosynthetic process"/>
    <property type="evidence" value="ECO:0007669"/>
    <property type="project" value="UniProtKB-UniRule"/>
</dbReference>
<dbReference type="GO" id="GO:0008360">
    <property type="term" value="P:regulation of cell shape"/>
    <property type="evidence" value="ECO:0007669"/>
    <property type="project" value="UniProtKB-KW"/>
</dbReference>
<dbReference type="CDD" id="cd03785">
    <property type="entry name" value="GT28_MurG"/>
    <property type="match status" value="1"/>
</dbReference>
<dbReference type="Gene3D" id="3.40.50.2000">
    <property type="entry name" value="Glycogen Phosphorylase B"/>
    <property type="match status" value="2"/>
</dbReference>
<dbReference type="HAMAP" id="MF_00033">
    <property type="entry name" value="MurG"/>
    <property type="match status" value="1"/>
</dbReference>
<dbReference type="InterPro" id="IPR006009">
    <property type="entry name" value="GlcNAc_MurG"/>
</dbReference>
<dbReference type="InterPro" id="IPR007235">
    <property type="entry name" value="Glyco_trans_28_C"/>
</dbReference>
<dbReference type="InterPro" id="IPR004276">
    <property type="entry name" value="GlycoTrans_28_N"/>
</dbReference>
<dbReference type="NCBIfam" id="TIGR01133">
    <property type="entry name" value="murG"/>
    <property type="match status" value="1"/>
</dbReference>
<dbReference type="PANTHER" id="PTHR21015:SF22">
    <property type="entry name" value="GLYCOSYLTRANSFERASE"/>
    <property type="match status" value="1"/>
</dbReference>
<dbReference type="PANTHER" id="PTHR21015">
    <property type="entry name" value="UDP-N-ACETYLGLUCOSAMINE--N-ACETYLMURAMYL-(PENTAPEPTIDE) PYROPHOSPHORYL-UNDECAPRENOL N-ACETYLGLUCOSAMINE TRANSFERASE 1"/>
    <property type="match status" value="1"/>
</dbReference>
<dbReference type="Pfam" id="PF04101">
    <property type="entry name" value="Glyco_tran_28_C"/>
    <property type="match status" value="1"/>
</dbReference>
<dbReference type="Pfam" id="PF03033">
    <property type="entry name" value="Glyco_transf_28"/>
    <property type="match status" value="1"/>
</dbReference>
<dbReference type="SUPFAM" id="SSF53756">
    <property type="entry name" value="UDP-Glycosyltransferase/glycogen phosphorylase"/>
    <property type="match status" value="1"/>
</dbReference>
<keyword id="KW-0131">Cell cycle</keyword>
<keyword id="KW-0132">Cell division</keyword>
<keyword id="KW-0997">Cell inner membrane</keyword>
<keyword id="KW-1003">Cell membrane</keyword>
<keyword id="KW-0133">Cell shape</keyword>
<keyword id="KW-0961">Cell wall biogenesis/degradation</keyword>
<keyword id="KW-0328">Glycosyltransferase</keyword>
<keyword id="KW-0472">Membrane</keyword>
<keyword id="KW-0573">Peptidoglycan synthesis</keyword>
<keyword id="KW-1185">Reference proteome</keyword>
<keyword id="KW-0808">Transferase</keyword>
<reference key="1">
    <citation type="submission" date="2007-10" db="EMBL/GenBank/DDBJ databases">
        <title>Brucella canis ATCC 23365 whole genome shotgun sequencing project.</title>
        <authorList>
            <person name="Setubal J.C."/>
            <person name="Bowns C."/>
            <person name="Boyle S."/>
            <person name="Crasta O.R."/>
            <person name="Czar M.J."/>
            <person name="Dharmanolla C."/>
            <person name="Gillespie J.J."/>
            <person name="Kenyon R.W."/>
            <person name="Lu J."/>
            <person name="Mane S."/>
            <person name="Mohapatra S."/>
            <person name="Nagrani S."/>
            <person name="Purkayastha A."/>
            <person name="Rajasimha H.K."/>
            <person name="Shallom J.M."/>
            <person name="Shallom S."/>
            <person name="Shukla M."/>
            <person name="Snyder E.E."/>
            <person name="Sobral B.W."/>
            <person name="Wattam A.R."/>
            <person name="Will R."/>
            <person name="Williams K."/>
            <person name="Yoo H."/>
            <person name="Bruce D."/>
            <person name="Detter C."/>
            <person name="Munk C."/>
            <person name="Brettin T.S."/>
        </authorList>
    </citation>
    <scope>NUCLEOTIDE SEQUENCE [LARGE SCALE GENOMIC DNA]</scope>
    <source>
        <strain>ATCC 23365 / NCTC 10854 / RM-666</strain>
    </source>
</reference>
<evidence type="ECO:0000255" key="1">
    <source>
        <dbReference type="HAMAP-Rule" id="MF_00033"/>
    </source>
</evidence>
<gene>
    <name evidence="1" type="primary">murG</name>
    <name type="ordered locus">BCAN_A1464</name>
</gene>
<sequence>MDNLANQGVIVLAAGGTGGHLFPAEALAHELRARGWDVHLATDARAQRFVGAFAQDHVHVIRSATIAGRNPVALLKTFWSLWQGNLDSRKLFRRLKPKLVVGFGGYPTLPPLYAASNMGIPTLIHEQNAVMGRANKGLAGRVKAIAGGFLPENSGAYAAKTVITGNPVRPPVLVAAATPYTPAGKDDRFRLLVFGGSQGAQFFSQAIPAAVALLPEHERARLLITQQARKEDEASARKAYEKLGVPADVAPFFNDMPARMADAHFVIARSGASTVSEITVIGRPAMLVPFPHALDHDQAANAAALAAAGGAEVVRQADLSPQRLAEMLQSAMNEPERLEQQAKAAKSVGKPDAARLLADLAEAIASGKTVQEFKEGNRP</sequence>